<name>NPY_RAT</name>
<dbReference type="EMBL" id="M15880">
    <property type="protein sequence ID" value="AAA41722.1"/>
    <property type="molecule type" value="mRNA"/>
</dbReference>
<dbReference type="EMBL" id="M15793">
    <property type="protein sequence ID" value="AAA41723.1"/>
    <property type="molecule type" value="Genomic_DNA"/>
</dbReference>
<dbReference type="EMBL" id="M15792">
    <property type="protein sequence ID" value="AAA41723.1"/>
    <property type="status" value="JOINED"/>
    <property type="molecule type" value="Genomic_DNA"/>
</dbReference>
<dbReference type="EMBL" id="M20373">
    <property type="protein sequence ID" value="AAA41724.1"/>
    <property type="molecule type" value="mRNA"/>
</dbReference>
<dbReference type="EMBL" id="AF392056">
    <property type="protein sequence ID" value="AAL28016.1"/>
    <property type="molecule type" value="Genomic_DNA"/>
</dbReference>
<dbReference type="EMBL" id="AF392057">
    <property type="protein sequence ID" value="AAL28017.1"/>
    <property type="molecule type" value="Genomic_DNA"/>
</dbReference>
<dbReference type="EMBL" id="AF392058">
    <property type="protein sequence ID" value="AAL28018.1"/>
    <property type="molecule type" value="Genomic_DNA"/>
</dbReference>
<dbReference type="EMBL" id="AF392059">
    <property type="protein sequence ID" value="AAL28019.1"/>
    <property type="molecule type" value="Genomic_DNA"/>
</dbReference>
<dbReference type="EMBL" id="AF392060">
    <property type="protein sequence ID" value="AAL28020.1"/>
    <property type="molecule type" value="Genomic_DNA"/>
</dbReference>
<dbReference type="EMBL" id="AF392061">
    <property type="protein sequence ID" value="AAL28021.1"/>
    <property type="molecule type" value="Genomic_DNA"/>
</dbReference>
<dbReference type="PIR" id="A27651">
    <property type="entry name" value="A25916"/>
</dbReference>
<dbReference type="RefSeq" id="NP_036746.1">
    <property type="nucleotide sequence ID" value="NM_012614.2"/>
</dbReference>
<dbReference type="RefSeq" id="XP_003749793.1">
    <property type="nucleotide sequence ID" value="XM_003749745.4"/>
</dbReference>
<dbReference type="BMRB" id="P07808"/>
<dbReference type="FunCoup" id="P07808">
    <property type="interactions" value="141"/>
</dbReference>
<dbReference type="STRING" id="10116.ENSRNOP00000013146"/>
<dbReference type="BindingDB" id="P07808"/>
<dbReference type="iPTMnet" id="P07808"/>
<dbReference type="PhosphoSitePlus" id="P07808"/>
<dbReference type="PaxDb" id="10116-ENSRNOP00000013146"/>
<dbReference type="ABCD" id="P07808">
    <property type="antibodies" value="1 sequenced antibody"/>
</dbReference>
<dbReference type="GeneID" id="24604"/>
<dbReference type="KEGG" id="rno:24604"/>
<dbReference type="UCSC" id="RGD:3197">
    <property type="organism name" value="rat"/>
</dbReference>
<dbReference type="AGR" id="RGD:3197"/>
<dbReference type="CTD" id="4852"/>
<dbReference type="RGD" id="3197">
    <property type="gene designation" value="Npy"/>
</dbReference>
<dbReference type="VEuPathDB" id="HostDB:ENSRNOG00000046449"/>
<dbReference type="eggNOG" id="ENOG502S2BU">
    <property type="taxonomic scope" value="Eukaryota"/>
</dbReference>
<dbReference type="HOGENOM" id="CLU_162379_1_0_1"/>
<dbReference type="InParanoid" id="P07808"/>
<dbReference type="OrthoDB" id="54221at9989"/>
<dbReference type="PhylomeDB" id="P07808"/>
<dbReference type="TreeFam" id="TF332778"/>
<dbReference type="Reactome" id="R-RNO-375276">
    <property type="pathway name" value="Peptide ligand-binding receptors"/>
</dbReference>
<dbReference type="Reactome" id="R-RNO-418594">
    <property type="pathway name" value="G alpha (i) signalling events"/>
</dbReference>
<dbReference type="PRO" id="PR:P07808"/>
<dbReference type="Proteomes" id="UP000002494">
    <property type="component" value="Chromosome 4"/>
</dbReference>
<dbReference type="Bgee" id="ENSRNOG00000009768">
    <property type="expression patterns" value="Expressed in ileum and 15 other cell types or tissues"/>
</dbReference>
<dbReference type="ExpressionAtlas" id="P07808">
    <property type="expression patterns" value="baseline and differential"/>
</dbReference>
<dbReference type="GO" id="GO:0005737">
    <property type="term" value="C:cytoplasm"/>
    <property type="evidence" value="ECO:0000266"/>
    <property type="project" value="RGD"/>
</dbReference>
<dbReference type="GO" id="GO:0005615">
    <property type="term" value="C:extracellular space"/>
    <property type="evidence" value="ECO:0000314"/>
    <property type="project" value="HGNC-UCL"/>
</dbReference>
<dbReference type="GO" id="GO:0098982">
    <property type="term" value="C:GABA-ergic synapse"/>
    <property type="evidence" value="ECO:0000266"/>
    <property type="project" value="RGD"/>
</dbReference>
<dbReference type="GO" id="GO:0005794">
    <property type="term" value="C:Golgi apparatus"/>
    <property type="evidence" value="ECO:0007669"/>
    <property type="project" value="Ensembl"/>
</dbReference>
<dbReference type="GO" id="GO:0098992">
    <property type="term" value="C:neuronal dense core vesicle"/>
    <property type="evidence" value="ECO:0000314"/>
    <property type="project" value="UniProtKB"/>
</dbReference>
<dbReference type="GO" id="GO:0043204">
    <property type="term" value="C:perikaryon"/>
    <property type="evidence" value="ECO:0000314"/>
    <property type="project" value="RGD"/>
</dbReference>
<dbReference type="GO" id="GO:0048471">
    <property type="term" value="C:perinuclear region of cytoplasm"/>
    <property type="evidence" value="ECO:0000314"/>
    <property type="project" value="RGD"/>
</dbReference>
<dbReference type="GO" id="GO:0043195">
    <property type="term" value="C:terminal bouton"/>
    <property type="evidence" value="ECO:0000314"/>
    <property type="project" value="RGD"/>
</dbReference>
<dbReference type="GO" id="GO:0001664">
    <property type="term" value="F:G protein-coupled receptor binding"/>
    <property type="evidence" value="ECO:0000266"/>
    <property type="project" value="RGD"/>
</dbReference>
<dbReference type="GO" id="GO:0005184">
    <property type="term" value="F:neuropeptide hormone activity"/>
    <property type="evidence" value="ECO:0000318"/>
    <property type="project" value="GO_Central"/>
</dbReference>
<dbReference type="GO" id="GO:0031841">
    <property type="term" value="F:neuropeptide Y receptor binding"/>
    <property type="evidence" value="ECO:0000315"/>
    <property type="project" value="RGD"/>
</dbReference>
<dbReference type="GO" id="GO:0008343">
    <property type="term" value="P:adult feeding behavior"/>
    <property type="evidence" value="ECO:0000314"/>
    <property type="project" value="HGNC-UCL"/>
</dbReference>
<dbReference type="GO" id="GO:0021954">
    <property type="term" value="P:central nervous system neuron development"/>
    <property type="evidence" value="ECO:0000266"/>
    <property type="project" value="RGD"/>
</dbReference>
<dbReference type="GO" id="GO:0021987">
    <property type="term" value="P:cerebral cortex development"/>
    <property type="evidence" value="ECO:0000266"/>
    <property type="project" value="RGD"/>
</dbReference>
<dbReference type="GO" id="GO:0007268">
    <property type="term" value="P:chemical synaptic transmission"/>
    <property type="evidence" value="ECO:0000314"/>
    <property type="project" value="RGD"/>
</dbReference>
<dbReference type="GO" id="GO:0007631">
    <property type="term" value="P:feeding behavior"/>
    <property type="evidence" value="ECO:0000318"/>
    <property type="project" value="GO_Central"/>
</dbReference>
<dbReference type="GO" id="GO:0042117">
    <property type="term" value="P:monocyte activation"/>
    <property type="evidence" value="ECO:0000314"/>
    <property type="project" value="RGD"/>
</dbReference>
<dbReference type="GO" id="GO:0002865">
    <property type="term" value="P:negative regulation of acute inflammatory response to antigenic stimulus"/>
    <property type="evidence" value="ECO:0000314"/>
    <property type="project" value="RGD"/>
</dbReference>
<dbReference type="GO" id="GO:0045776">
    <property type="term" value="P:negative regulation of blood pressure"/>
    <property type="evidence" value="ECO:0000315"/>
    <property type="project" value="RGD"/>
</dbReference>
<dbReference type="GO" id="GO:0031175">
    <property type="term" value="P:neuron projection development"/>
    <property type="evidence" value="ECO:0000266"/>
    <property type="project" value="RGD"/>
</dbReference>
<dbReference type="GO" id="GO:0007218">
    <property type="term" value="P:neuropeptide signaling pathway"/>
    <property type="evidence" value="ECO:0000315"/>
    <property type="project" value="RGD"/>
</dbReference>
<dbReference type="GO" id="GO:0032100">
    <property type="term" value="P:positive regulation of appetite"/>
    <property type="evidence" value="ECO:0000314"/>
    <property type="project" value="HGNC-UCL"/>
</dbReference>
<dbReference type="GO" id="GO:0008284">
    <property type="term" value="P:positive regulation of cell population proliferation"/>
    <property type="evidence" value="ECO:0000314"/>
    <property type="project" value="RGD"/>
</dbReference>
<dbReference type="GO" id="GO:0010811">
    <property type="term" value="P:positive regulation of cell-substrate adhesion"/>
    <property type="evidence" value="ECO:0000314"/>
    <property type="project" value="RGD"/>
</dbReference>
<dbReference type="GO" id="GO:0045964">
    <property type="term" value="P:positive regulation of dopamine metabolic process"/>
    <property type="evidence" value="ECO:0000314"/>
    <property type="project" value="RGD"/>
</dbReference>
<dbReference type="GO" id="GO:1904000">
    <property type="term" value="P:positive regulation of eating behavior"/>
    <property type="evidence" value="ECO:0000314"/>
    <property type="project" value="RGD"/>
</dbReference>
<dbReference type="GO" id="GO:0070374">
    <property type="term" value="P:positive regulation of ERK1 and ERK2 cascade"/>
    <property type="evidence" value="ECO:0000314"/>
    <property type="project" value="RGD"/>
</dbReference>
<dbReference type="GO" id="GO:1904407">
    <property type="term" value="P:positive regulation of nitric oxide metabolic process"/>
    <property type="evidence" value="ECO:0000314"/>
    <property type="project" value="RGD"/>
</dbReference>
<dbReference type="GO" id="GO:0008217">
    <property type="term" value="P:regulation of blood pressure"/>
    <property type="evidence" value="ECO:0000266"/>
    <property type="project" value="RGD"/>
</dbReference>
<dbReference type="GO" id="GO:0032903">
    <property type="term" value="P:regulation of nerve growth factor production"/>
    <property type="evidence" value="ECO:0000314"/>
    <property type="project" value="RGD"/>
</dbReference>
<dbReference type="GO" id="GO:0099509">
    <property type="term" value="P:regulation of presynaptic cytosolic calcium ion concentration"/>
    <property type="evidence" value="ECO:0000314"/>
    <property type="project" value="SynGO"/>
</dbReference>
<dbReference type="GO" id="GO:2000300">
    <property type="term" value="P:regulation of synaptic vesicle exocytosis"/>
    <property type="evidence" value="ECO:0000314"/>
    <property type="project" value="SynGO"/>
</dbReference>
<dbReference type="GO" id="GO:0048572">
    <property type="term" value="P:short-day photoperiodism"/>
    <property type="evidence" value="ECO:0000270"/>
    <property type="project" value="RGD"/>
</dbReference>
<dbReference type="GO" id="GO:0099538">
    <property type="term" value="P:synaptic signaling via neuropeptide"/>
    <property type="evidence" value="ECO:0000266"/>
    <property type="project" value="RGD"/>
</dbReference>
<dbReference type="CDD" id="cd00126">
    <property type="entry name" value="PAH"/>
    <property type="match status" value="1"/>
</dbReference>
<dbReference type="Gene3D" id="6.10.250.900">
    <property type="match status" value="1"/>
</dbReference>
<dbReference type="InterPro" id="IPR001955">
    <property type="entry name" value="Pancreatic_hormone-like"/>
</dbReference>
<dbReference type="InterPro" id="IPR020392">
    <property type="entry name" value="Pancreatic_hormone-like_CS"/>
</dbReference>
<dbReference type="PANTHER" id="PTHR10533">
    <property type="entry name" value="NEUROPEPTIDE Y/PANCREATIC HORMONE/PEPTIDE YY"/>
    <property type="match status" value="1"/>
</dbReference>
<dbReference type="PANTHER" id="PTHR10533:SF5">
    <property type="entry name" value="PRO-NEUROPEPTIDE Y"/>
    <property type="match status" value="1"/>
</dbReference>
<dbReference type="Pfam" id="PF00159">
    <property type="entry name" value="Hormone_3"/>
    <property type="match status" value="1"/>
</dbReference>
<dbReference type="PRINTS" id="PR00278">
    <property type="entry name" value="PANCHORMONE"/>
</dbReference>
<dbReference type="SMART" id="SM00309">
    <property type="entry name" value="PAH"/>
    <property type="match status" value="1"/>
</dbReference>
<dbReference type="PROSITE" id="PS00265">
    <property type="entry name" value="PANCREATIC_HORMONE_1"/>
    <property type="match status" value="1"/>
</dbReference>
<dbReference type="PROSITE" id="PS50276">
    <property type="entry name" value="PANCREATIC_HORMONE_2"/>
    <property type="match status" value="1"/>
</dbReference>
<gene>
    <name type="primary">Npy</name>
</gene>
<proteinExistence type="evidence at protein level"/>
<keyword id="KW-0027">Amidation</keyword>
<keyword id="KW-0165">Cleavage on pair of basic residues</keyword>
<keyword id="KW-0968">Cytoplasmic vesicle</keyword>
<keyword id="KW-0903">Direct protein sequencing</keyword>
<keyword id="KW-0527">Neuropeptide</keyword>
<keyword id="KW-0597">Phosphoprotein</keyword>
<keyword id="KW-1185">Reference proteome</keyword>
<keyword id="KW-0964">Secreted</keyword>
<keyword id="KW-0732">Signal</keyword>
<protein>
    <recommendedName>
        <fullName>Pro-neuropeptide Y</fullName>
    </recommendedName>
    <component>
        <recommendedName>
            <fullName>Neuropeptide Y</fullName>
        </recommendedName>
        <alternativeName>
            <fullName>Neuropeptide tyrosine</fullName>
            <shortName>NPY</shortName>
        </alternativeName>
    </component>
    <component>
        <recommendedName>
            <fullName>C-flanking peptide of NPY</fullName>
            <shortName>CPON</shortName>
        </recommendedName>
    </component>
</protein>
<organism>
    <name type="scientific">Rattus norvegicus</name>
    <name type="common">Rat</name>
    <dbReference type="NCBI Taxonomy" id="10116"/>
    <lineage>
        <taxon>Eukaryota</taxon>
        <taxon>Metazoa</taxon>
        <taxon>Chordata</taxon>
        <taxon>Craniata</taxon>
        <taxon>Vertebrata</taxon>
        <taxon>Euteleostomi</taxon>
        <taxon>Mammalia</taxon>
        <taxon>Eutheria</taxon>
        <taxon>Euarchontoglires</taxon>
        <taxon>Glires</taxon>
        <taxon>Rodentia</taxon>
        <taxon>Myomorpha</taxon>
        <taxon>Muroidea</taxon>
        <taxon>Muridae</taxon>
        <taxon>Murinae</taxon>
        <taxon>Rattus</taxon>
    </lineage>
</organism>
<sequence>MMLGNKRMGLCGLTLALSLLVCLGILAEGYPSKPDNPGEDAPAEDMARYYSALRHYINLITRQRYGKRSSPETLISDLLMRESTENAPRTRLEDPSMW</sequence>
<evidence type="ECO:0000250" key="1">
    <source>
        <dbReference type="UniProtKB" id="P01303"/>
    </source>
</evidence>
<evidence type="ECO:0000256" key="2">
    <source>
        <dbReference type="SAM" id="MobiDB-lite"/>
    </source>
</evidence>
<evidence type="ECO:0000269" key="3">
    <source>
    </source>
</evidence>
<evidence type="ECO:0000269" key="4">
    <source>
    </source>
</evidence>
<evidence type="ECO:0000269" key="5">
    <source>
    </source>
</evidence>
<evidence type="ECO:0000269" key="6">
    <source>
    </source>
</evidence>
<evidence type="ECO:0000305" key="7"/>
<accession>P07808</accession>
<reference key="1">
    <citation type="journal article" date="1987" name="Proc. Natl. Acad. Sci. U.S.A.">
        <title>Molecular structure of mammalian neuropeptide Y: analysis by molecular cloning and computer-aided comparison with crystal structure of avian homologue.</title>
        <authorList>
            <person name="Allen J."/>
            <person name="Novotny J."/>
            <person name="Martin J."/>
            <person name="Heinrich G."/>
        </authorList>
    </citation>
    <scope>NUCLEOTIDE SEQUENCE [MRNA]</scope>
</reference>
<reference key="2">
    <citation type="journal article" date="1987" name="Proc. Natl. Acad. Sci. U.S.A.">
        <title>Structure and expression of the rat neuropeptide Y gene.</title>
        <authorList>
            <person name="Larhammar D."/>
            <person name="Ericsson A."/>
            <person name="Persson H."/>
        </authorList>
    </citation>
    <scope>NUCLEOTIDE SEQUENCE [GENOMIC DNA]</scope>
</reference>
<reference key="3">
    <citation type="journal article" date="1988" name="J. Biol. Chem.">
        <title>Rat neuropeptide Y precursor gene expression. mRNA structure, tissue distribution, and regulation by glucocorticoids, cyclic AMP, and phorbol ester.</title>
        <authorList>
            <person name="Higuchi H."/>
            <person name="Yang H.-Y.T."/>
            <person name="Sabol S.L."/>
        </authorList>
    </citation>
    <scope>NUCLEOTIDE SEQUENCE [MRNA]</scope>
</reference>
<reference key="4">
    <citation type="submission" date="2001-06" db="EMBL/GenBank/DDBJ databases">
        <title>Polymorphic differences in the neuropeptide Y gene among six autoimmune disease susceptible and resistant inbred rat strains.</title>
        <authorList>
            <person name="Dracheva T.V."/>
            <person name="Joe B."/>
            <person name="Hashiramoto A."/>
            <person name="Dobbins D.E."/>
            <person name="Wilder R.L."/>
            <person name="Remmers E.F."/>
        </authorList>
    </citation>
    <scope>NUCLEOTIDE SEQUENCE [GENOMIC DNA]</scope>
    <source>
        <strain>ACI/SegHsd</strain>
        <strain>BB(DR)/Wor</strain>
        <strain>Brown Norway/SsNHsd</strain>
        <strain>DA/Bkl</strain>
        <strain>F344/NHsd</strain>
        <strain>LEW/NHsd</strain>
    </source>
</reference>
<reference key="5">
    <citation type="journal article" date="1988" name="Regul. Pept.">
        <title>Isolation and sequence of rat peptide YY and neuropeptide Y.</title>
        <authorList>
            <person name="Corder R."/>
            <person name="Gaillard R.C."/>
            <person name="Boehlen P."/>
        </authorList>
    </citation>
    <scope>PROTEIN SEQUENCE OF 30-65</scope>
    <scope>AMIDATION AT TYR-65</scope>
</reference>
<reference key="6">
    <citation type="journal article" date="2017" name="Cell Rep.">
        <title>Capture of Dense Core Vesicles at Synapses by JNK-Dependent Phosphorylation of Synaptotagmin-4.</title>
        <authorList>
            <person name="Bharat V."/>
            <person name="Siebrecht M."/>
            <person name="Burk K."/>
            <person name="Ahmed S."/>
            <person name="Reissner C."/>
            <person name="Kohansal-Nodehi M."/>
            <person name="Steubler V."/>
            <person name="Zweckstetter M."/>
            <person name="Ting J.T."/>
            <person name="Dean C."/>
        </authorList>
    </citation>
    <scope>SUBCELLULAR LOCATION</scope>
</reference>
<reference key="7">
    <citation type="journal article" date="2018" name="Cell Rep.">
        <title>Regulation of KIF1A-Driven Dense Core Vesicle Transport: Ca2+/CaM Controls DCV Binding and Liprin-alpha/TANC2 Recruits DCVs to Postsynaptic Sites.</title>
        <authorList>
            <person name="Stucchi R."/>
            <person name="Plucinska G."/>
            <person name="Hummel J.J.A."/>
            <person name="Zahavi E.E."/>
            <person name="Guerra San Juan I."/>
            <person name="Klykov O."/>
            <person name="Scheltema R.A."/>
            <person name="Altelaar A.F.M."/>
            <person name="Hoogenraad C.C."/>
        </authorList>
    </citation>
    <scope>SUBCELLULAR LOCATION</scope>
</reference>
<feature type="signal peptide" evidence="6">
    <location>
        <begin position="1"/>
        <end position="29"/>
    </location>
</feature>
<feature type="peptide" id="PRO_0000025329" description="Neuropeptide Y" evidence="6">
    <location>
        <begin position="30"/>
        <end position="65"/>
    </location>
</feature>
<feature type="peptide" id="PRO_0000025330" description="C-flanking peptide of NPY">
    <location>
        <begin position="69"/>
        <end position="98"/>
    </location>
</feature>
<feature type="region of interest" description="Disordered" evidence="2">
    <location>
        <begin position="76"/>
        <end position="98"/>
    </location>
</feature>
<feature type="compositionally biased region" description="Basic and acidic residues" evidence="2">
    <location>
        <begin position="79"/>
        <end position="98"/>
    </location>
</feature>
<feature type="site" description="Cleavage; by FAP" evidence="1">
    <location>
        <begin position="31"/>
        <end position="32"/>
    </location>
</feature>
<feature type="modified residue" description="Tyrosine amide" evidence="3 6">
    <location>
        <position position="65"/>
    </location>
</feature>
<feature type="modified residue" description="Phosphothreonine" evidence="1">
    <location>
        <position position="84"/>
    </location>
</feature>
<comment type="function">
    <text>NPY is implicated in the control of feeding and in secretion of gonadotrophin-release hormone.</text>
</comment>
<comment type="subcellular location">
    <subcellularLocation>
        <location>Secreted</location>
    </subcellularLocation>
    <subcellularLocation>
        <location evidence="4 5">Cytoplasmic vesicle</location>
        <location evidence="4 5">Secretory vesicle</location>
        <location evidence="4 5">Neuronal dense core vesicle</location>
    </subcellularLocation>
</comment>
<comment type="tissue specificity">
    <text>One of the most abundant peptides in the nervous system. Also found in some chromaffin cells of the adrenal medulla.</text>
</comment>
<comment type="PTM">
    <text evidence="1">The neuropeptide Y form is cleaved at Pro-31 by the prolyl endopeptidase FAP (seprase) activity (in vitro).</text>
</comment>
<comment type="similarity">
    <text evidence="7">Belongs to the NPY family.</text>
</comment>